<accession>A0A7M4DUE8</accession>
<protein>
    <recommendedName>
        <fullName evidence="2">Mu-conotoxin SxIIIC</fullName>
    </recommendedName>
</protein>
<reference evidence="5" key="1">
    <citation type="journal article" date="2020" name="Biomedicines">
        <title>Discovery, pharmacological characterisation and NMR structure of the novel mu-conotoxin SxIIIC, a potent and irreversible NaV channel inhibitor.</title>
        <authorList>
            <person name="McMahon K.L."/>
            <person name="Tran H.N.T."/>
            <person name="Deuis J.R."/>
            <person name="Lewis R.J."/>
            <person name="Vetter I."/>
            <person name="Schroeder C.I."/>
        </authorList>
    </citation>
    <scope>PROTEIN SEQUENCE</scope>
    <scope>SYNTHESIS</scope>
    <scope>STRUCTURE BY NMR</scope>
    <scope>SUBCELLULAR LOCATION</scope>
    <scope>MASS SPECTROMETRY</scope>
    <scope>DISULFIDE BONDS</scope>
    <scope>AMIDATION AT CYS-22</scope>
    <source>
        <tissue>Venom</tissue>
    </source>
</reference>
<comment type="function">
    <text evidence="1">Mu-conotoxins block voltage-gated sodium channels (Nav). This toxin potently inhibits hNav1.4/SCN4A (IC(50)=15.11 nM). It also displays lower activities on other human subtypes (Nav1.1/SCN1A; IC(50)=132 nM, Nav1.2/SCN2A; IC(50)=363.8, Nav1.3/SCN3A; IC(50)=89.4, Nav1.6/SCN3A; IC(50)=124.9, Nav1.7/SCN7A; IC(50)=152.2). At Nav1.7/SCN9A, it does not elicit change in channel voltage-dependence of fast inactivation or activation, suggesting it acts as a pore blocker. Interestingly, it blocks current inhibition in an irreversible manner (tested during 35 minutes).</text>
</comment>
<comment type="subcellular location">
    <subcellularLocation>
        <location evidence="1">Secreted</location>
    </subcellularLocation>
</comment>
<comment type="tissue specificity">
    <text evidence="4">Expressed by the venom duct.</text>
</comment>
<comment type="domain">
    <text evidence="3">The cysteine framework is III (CC-C-C-CC). Classified in the M-5 branch, since 5 residues stand between the fourth and the fifth cysteine residues.</text>
</comment>
<comment type="mass spectrometry" mass="2435.78" method="MALDI" evidence="1"/>
<comment type="miscellaneous">
    <text evidence="1">Negative results: does not show activity on hNav1.5/SCN5A and hNav1.8/SCN10A (tested at 1 uM).</text>
</comment>
<comment type="similarity">
    <text evidence="3">Belongs to the conotoxin M superfamily.</text>
</comment>
<proteinExistence type="evidence at protein level"/>
<organism evidence="5">
    <name type="scientific">Conus striolatus</name>
    <name type="common">Cone snail</name>
    <dbReference type="NCBI Taxonomy" id="101315"/>
    <lineage>
        <taxon>Eukaryota</taxon>
        <taxon>Metazoa</taxon>
        <taxon>Spiralia</taxon>
        <taxon>Lophotrochozoa</taxon>
        <taxon>Mollusca</taxon>
        <taxon>Gastropoda</taxon>
        <taxon>Caenogastropoda</taxon>
        <taxon>Neogastropoda</taxon>
        <taxon>Conoidea</taxon>
        <taxon>Conidae</taxon>
        <taxon>Conus</taxon>
        <taxon>Pionoconus</taxon>
    </lineage>
</organism>
<name>CM3C_CONSR</name>
<evidence type="ECO:0000269" key="1">
    <source>
    </source>
</evidence>
<evidence type="ECO:0000303" key="2">
    <source>
    </source>
</evidence>
<evidence type="ECO:0000305" key="3"/>
<evidence type="ECO:0000305" key="4">
    <source>
    </source>
</evidence>
<evidence type="ECO:0000312" key="5">
    <source>
        <dbReference type="PDB" id="6X8R"/>
    </source>
</evidence>
<feature type="peptide" id="PRO_0000453397" description="Mu-conotoxin SxIIIC" evidence="1">
    <location>
        <begin position="1"/>
        <end position="22"/>
    </location>
</feature>
<feature type="modified residue" description="Cysteine amide" evidence="1">
    <location>
        <position position="22"/>
    </location>
</feature>
<feature type="disulfide bond" evidence="1">
    <location>
        <begin position="3"/>
        <end position="15"/>
    </location>
</feature>
<feature type="disulfide bond" evidence="1">
    <location>
        <begin position="4"/>
        <end position="21"/>
    </location>
</feature>
<feature type="disulfide bond" evidence="1">
    <location>
        <begin position="10"/>
        <end position="22"/>
    </location>
</feature>
<dbReference type="PDB" id="6X8R">
    <property type="method" value="NMR"/>
    <property type="chains" value="A=1-22"/>
</dbReference>
<dbReference type="PDBsum" id="6X8R"/>
<dbReference type="GO" id="GO:0005576">
    <property type="term" value="C:extracellular region"/>
    <property type="evidence" value="ECO:0007669"/>
    <property type="project" value="UniProtKB-SubCell"/>
</dbReference>
<dbReference type="GO" id="GO:0019871">
    <property type="term" value="F:sodium channel inhibitor activity"/>
    <property type="evidence" value="ECO:0007669"/>
    <property type="project" value="InterPro"/>
</dbReference>
<dbReference type="GO" id="GO:0090729">
    <property type="term" value="F:toxin activity"/>
    <property type="evidence" value="ECO:0007669"/>
    <property type="project" value="UniProtKB-KW"/>
</dbReference>
<dbReference type="InterPro" id="IPR008036">
    <property type="entry name" value="Conotoxin_mu-typ"/>
</dbReference>
<dbReference type="PROSITE" id="PS60013">
    <property type="entry name" value="MU_CONOTOXIN"/>
    <property type="match status" value="1"/>
</dbReference>
<keyword id="KW-0002">3D-structure</keyword>
<keyword id="KW-0027">Amidation</keyword>
<keyword id="KW-0903">Direct protein sequencing</keyword>
<keyword id="KW-1015">Disulfide bond</keyword>
<keyword id="KW-0872">Ion channel impairing toxin</keyword>
<keyword id="KW-0528">Neurotoxin</keyword>
<keyword id="KW-0964">Secreted</keyword>
<keyword id="KW-0800">Toxin</keyword>
<keyword id="KW-0738">Voltage-gated sodium channel impairing toxin</keyword>
<sequence length="22" mass="2444">RGCCNGRGGCSSRWCRDHARCC</sequence>